<proteinExistence type="inferred from homology"/>
<keyword id="KW-0131">Cell cycle</keyword>
<keyword id="KW-0132">Cell division</keyword>
<sequence>MNLFDFFRGRQKQTSASVAKERLQIIVAHERGQRSTPDYLPALQKELVEVIRKYVNIGNDDVQVALENQGSCSILELNITLPER</sequence>
<feature type="chain" id="PRO_0000298160" description="Cell division topological specificity factor">
    <location>
        <begin position="1"/>
        <end position="84"/>
    </location>
</feature>
<name>MINE_PSEE4</name>
<reference key="1">
    <citation type="journal article" date="2006" name="Nat. Biotechnol.">
        <title>Complete genome sequence of the entomopathogenic and metabolically versatile soil bacterium Pseudomonas entomophila.</title>
        <authorList>
            <person name="Vodovar N."/>
            <person name="Vallenet D."/>
            <person name="Cruveiller S."/>
            <person name="Rouy Z."/>
            <person name="Barbe V."/>
            <person name="Acosta C."/>
            <person name="Cattolico L."/>
            <person name="Jubin C."/>
            <person name="Lajus A."/>
            <person name="Segurens B."/>
            <person name="Vacherie B."/>
            <person name="Wincker P."/>
            <person name="Weissenbach J."/>
            <person name="Lemaitre B."/>
            <person name="Medigue C."/>
            <person name="Boccard F."/>
        </authorList>
    </citation>
    <scope>NUCLEOTIDE SEQUENCE [LARGE SCALE GENOMIC DNA]</scope>
    <source>
        <strain>L48</strain>
    </source>
</reference>
<evidence type="ECO:0000255" key="1">
    <source>
        <dbReference type="HAMAP-Rule" id="MF_00262"/>
    </source>
</evidence>
<gene>
    <name evidence="1" type="primary">minE</name>
    <name type="ordered locus">PSEEN1444</name>
</gene>
<dbReference type="EMBL" id="CT573326">
    <property type="protein sequence ID" value="CAK14315.1"/>
    <property type="molecule type" value="Genomic_DNA"/>
</dbReference>
<dbReference type="RefSeq" id="WP_011532731.1">
    <property type="nucleotide sequence ID" value="NC_008027.1"/>
</dbReference>
<dbReference type="SMR" id="Q1IDE4"/>
<dbReference type="STRING" id="384676.PSEEN1444"/>
<dbReference type="GeneID" id="58767127"/>
<dbReference type="KEGG" id="pen:PSEEN1444"/>
<dbReference type="eggNOG" id="COG0851">
    <property type="taxonomic scope" value="Bacteria"/>
</dbReference>
<dbReference type="HOGENOM" id="CLU_137929_2_1_6"/>
<dbReference type="OrthoDB" id="9802655at2"/>
<dbReference type="Proteomes" id="UP000000658">
    <property type="component" value="Chromosome"/>
</dbReference>
<dbReference type="GO" id="GO:0051301">
    <property type="term" value="P:cell division"/>
    <property type="evidence" value="ECO:0007669"/>
    <property type="project" value="UniProtKB-KW"/>
</dbReference>
<dbReference type="GO" id="GO:0032955">
    <property type="term" value="P:regulation of division septum assembly"/>
    <property type="evidence" value="ECO:0007669"/>
    <property type="project" value="InterPro"/>
</dbReference>
<dbReference type="FunFam" id="3.30.1070.10:FF:000001">
    <property type="entry name" value="Cell division topological specificity factor"/>
    <property type="match status" value="1"/>
</dbReference>
<dbReference type="Gene3D" id="3.30.1070.10">
    <property type="entry name" value="Cell division topological specificity factor MinE"/>
    <property type="match status" value="1"/>
</dbReference>
<dbReference type="HAMAP" id="MF_00262">
    <property type="entry name" value="MinE"/>
    <property type="match status" value="1"/>
</dbReference>
<dbReference type="InterPro" id="IPR005527">
    <property type="entry name" value="MinE"/>
</dbReference>
<dbReference type="InterPro" id="IPR036707">
    <property type="entry name" value="MinE_sf"/>
</dbReference>
<dbReference type="NCBIfam" id="TIGR01215">
    <property type="entry name" value="minE"/>
    <property type="match status" value="1"/>
</dbReference>
<dbReference type="NCBIfam" id="NF001422">
    <property type="entry name" value="PRK00296.1"/>
    <property type="match status" value="1"/>
</dbReference>
<dbReference type="NCBIfam" id="NF010595">
    <property type="entry name" value="PRK13989.1"/>
    <property type="match status" value="1"/>
</dbReference>
<dbReference type="Pfam" id="PF03776">
    <property type="entry name" value="MinE"/>
    <property type="match status" value="1"/>
</dbReference>
<dbReference type="SUPFAM" id="SSF55229">
    <property type="entry name" value="Cell division protein MinE topological specificity domain"/>
    <property type="match status" value="1"/>
</dbReference>
<comment type="function">
    <text evidence="1">Prevents the cell division inhibition by proteins MinC and MinD at internal division sites while permitting inhibition at polar sites. This ensures cell division at the proper site by restricting the formation of a division septum at the midpoint of the long axis of the cell.</text>
</comment>
<comment type="similarity">
    <text evidence="1">Belongs to the MinE family.</text>
</comment>
<accession>Q1IDE4</accession>
<protein>
    <recommendedName>
        <fullName evidence="1">Cell division topological specificity factor</fullName>
    </recommendedName>
</protein>
<organism>
    <name type="scientific">Pseudomonas entomophila (strain L48)</name>
    <dbReference type="NCBI Taxonomy" id="384676"/>
    <lineage>
        <taxon>Bacteria</taxon>
        <taxon>Pseudomonadati</taxon>
        <taxon>Pseudomonadota</taxon>
        <taxon>Gammaproteobacteria</taxon>
        <taxon>Pseudomonadales</taxon>
        <taxon>Pseudomonadaceae</taxon>
        <taxon>Pseudomonas</taxon>
    </lineage>
</organism>